<organism>
    <name type="scientific">Xanthomonas oryzae pv. oryzae (strain KACC10331 / KXO85)</name>
    <dbReference type="NCBI Taxonomy" id="291331"/>
    <lineage>
        <taxon>Bacteria</taxon>
        <taxon>Pseudomonadati</taxon>
        <taxon>Pseudomonadota</taxon>
        <taxon>Gammaproteobacteria</taxon>
        <taxon>Lysobacterales</taxon>
        <taxon>Lysobacteraceae</taxon>
        <taxon>Xanthomonas</taxon>
    </lineage>
</organism>
<reference key="1">
    <citation type="journal article" date="2005" name="Nucleic Acids Res.">
        <title>The genome sequence of Xanthomonas oryzae pathovar oryzae KACC10331, the bacterial blight pathogen of rice.</title>
        <authorList>
            <person name="Lee B.-M."/>
            <person name="Park Y.-J."/>
            <person name="Park D.-S."/>
            <person name="Kang H.-W."/>
            <person name="Kim J.-G."/>
            <person name="Song E.-S."/>
            <person name="Park I.-C."/>
            <person name="Yoon U.-H."/>
            <person name="Hahn J.-H."/>
            <person name="Koo B.-S."/>
            <person name="Lee G.-B."/>
            <person name="Kim H."/>
            <person name="Park H.-S."/>
            <person name="Yoon K.-O."/>
            <person name="Kim J.-H."/>
            <person name="Jung C.-H."/>
            <person name="Koh N.-H."/>
            <person name="Seo J.-S."/>
            <person name="Go S.-J."/>
        </authorList>
    </citation>
    <scope>NUCLEOTIDE SEQUENCE [LARGE SCALE GENOMIC DNA]</scope>
    <source>
        <strain>KACC10331 / KXO85</strain>
    </source>
</reference>
<name>SYR_XANOR</name>
<comment type="catalytic activity">
    <reaction evidence="1">
        <text>tRNA(Arg) + L-arginine + ATP = L-arginyl-tRNA(Arg) + AMP + diphosphate</text>
        <dbReference type="Rhea" id="RHEA:20301"/>
        <dbReference type="Rhea" id="RHEA-COMP:9658"/>
        <dbReference type="Rhea" id="RHEA-COMP:9673"/>
        <dbReference type="ChEBI" id="CHEBI:30616"/>
        <dbReference type="ChEBI" id="CHEBI:32682"/>
        <dbReference type="ChEBI" id="CHEBI:33019"/>
        <dbReference type="ChEBI" id="CHEBI:78442"/>
        <dbReference type="ChEBI" id="CHEBI:78513"/>
        <dbReference type="ChEBI" id="CHEBI:456215"/>
        <dbReference type="EC" id="6.1.1.19"/>
    </reaction>
</comment>
<comment type="subunit">
    <text evidence="1">Monomer.</text>
</comment>
<comment type="subcellular location">
    <subcellularLocation>
        <location evidence="1">Cytoplasm</location>
    </subcellularLocation>
</comment>
<comment type="similarity">
    <text evidence="1">Belongs to the class-I aminoacyl-tRNA synthetase family.</text>
</comment>
<comment type="sequence caution" evidence="2">
    <conflict type="erroneous initiation">
        <sequence resource="EMBL-CDS" id="AAW73748"/>
    </conflict>
</comment>
<evidence type="ECO:0000255" key="1">
    <source>
        <dbReference type="HAMAP-Rule" id="MF_00123"/>
    </source>
</evidence>
<evidence type="ECO:0000305" key="2"/>
<dbReference type="EC" id="6.1.1.19" evidence="1"/>
<dbReference type="EMBL" id="AE013598">
    <property type="protein sequence ID" value="AAW73748.1"/>
    <property type="status" value="ALT_INIT"/>
    <property type="molecule type" value="Genomic_DNA"/>
</dbReference>
<dbReference type="SMR" id="Q5H5M2"/>
<dbReference type="STRING" id="291331.XOO0494"/>
<dbReference type="KEGG" id="xoo:XOO0494"/>
<dbReference type="PATRIC" id="fig|291331.8.peg.552"/>
<dbReference type="HOGENOM" id="CLU_006406_0_1_6"/>
<dbReference type="Proteomes" id="UP000006735">
    <property type="component" value="Chromosome"/>
</dbReference>
<dbReference type="GO" id="GO:0005737">
    <property type="term" value="C:cytoplasm"/>
    <property type="evidence" value="ECO:0007669"/>
    <property type="project" value="UniProtKB-SubCell"/>
</dbReference>
<dbReference type="GO" id="GO:0004814">
    <property type="term" value="F:arginine-tRNA ligase activity"/>
    <property type="evidence" value="ECO:0007669"/>
    <property type="project" value="UniProtKB-UniRule"/>
</dbReference>
<dbReference type="GO" id="GO:0005524">
    <property type="term" value="F:ATP binding"/>
    <property type="evidence" value="ECO:0007669"/>
    <property type="project" value="UniProtKB-UniRule"/>
</dbReference>
<dbReference type="GO" id="GO:0006420">
    <property type="term" value="P:arginyl-tRNA aminoacylation"/>
    <property type="evidence" value="ECO:0007669"/>
    <property type="project" value="UniProtKB-UniRule"/>
</dbReference>
<dbReference type="CDD" id="cd00671">
    <property type="entry name" value="ArgRS_core"/>
    <property type="match status" value="1"/>
</dbReference>
<dbReference type="FunFam" id="1.10.730.10:FF:000008">
    <property type="entry name" value="Arginine--tRNA ligase"/>
    <property type="match status" value="1"/>
</dbReference>
<dbReference type="FunFam" id="3.30.1360.70:FF:000003">
    <property type="entry name" value="Arginine--tRNA ligase"/>
    <property type="match status" value="1"/>
</dbReference>
<dbReference type="FunFam" id="3.40.50.620:FF:000062">
    <property type="entry name" value="Arginine--tRNA ligase"/>
    <property type="match status" value="1"/>
</dbReference>
<dbReference type="Gene3D" id="3.30.1360.70">
    <property type="entry name" value="Arginyl tRNA synthetase N-terminal domain"/>
    <property type="match status" value="1"/>
</dbReference>
<dbReference type="Gene3D" id="3.40.50.620">
    <property type="entry name" value="HUPs"/>
    <property type="match status" value="1"/>
</dbReference>
<dbReference type="Gene3D" id="1.10.730.10">
    <property type="entry name" value="Isoleucyl-tRNA Synthetase, Domain 1"/>
    <property type="match status" value="1"/>
</dbReference>
<dbReference type="HAMAP" id="MF_00123">
    <property type="entry name" value="Arg_tRNA_synth"/>
    <property type="match status" value="1"/>
</dbReference>
<dbReference type="InterPro" id="IPR001412">
    <property type="entry name" value="aa-tRNA-synth_I_CS"/>
</dbReference>
<dbReference type="InterPro" id="IPR001278">
    <property type="entry name" value="Arg-tRNA-ligase"/>
</dbReference>
<dbReference type="InterPro" id="IPR005148">
    <property type="entry name" value="Arg-tRNA-synth_N"/>
</dbReference>
<dbReference type="InterPro" id="IPR036695">
    <property type="entry name" value="Arg-tRNA-synth_N_sf"/>
</dbReference>
<dbReference type="InterPro" id="IPR035684">
    <property type="entry name" value="ArgRS_core"/>
</dbReference>
<dbReference type="InterPro" id="IPR008909">
    <property type="entry name" value="DALR_anticod-bd"/>
</dbReference>
<dbReference type="InterPro" id="IPR014729">
    <property type="entry name" value="Rossmann-like_a/b/a_fold"/>
</dbReference>
<dbReference type="InterPro" id="IPR009080">
    <property type="entry name" value="tRNAsynth_Ia_anticodon-bd"/>
</dbReference>
<dbReference type="NCBIfam" id="TIGR00456">
    <property type="entry name" value="argS"/>
    <property type="match status" value="1"/>
</dbReference>
<dbReference type="PANTHER" id="PTHR11956:SF5">
    <property type="entry name" value="ARGININE--TRNA LIGASE, CYTOPLASMIC"/>
    <property type="match status" value="1"/>
</dbReference>
<dbReference type="PANTHER" id="PTHR11956">
    <property type="entry name" value="ARGINYL-TRNA SYNTHETASE"/>
    <property type="match status" value="1"/>
</dbReference>
<dbReference type="Pfam" id="PF03485">
    <property type="entry name" value="Arg_tRNA_synt_N"/>
    <property type="match status" value="1"/>
</dbReference>
<dbReference type="Pfam" id="PF05746">
    <property type="entry name" value="DALR_1"/>
    <property type="match status" value="1"/>
</dbReference>
<dbReference type="Pfam" id="PF00750">
    <property type="entry name" value="tRNA-synt_1d"/>
    <property type="match status" value="1"/>
</dbReference>
<dbReference type="PRINTS" id="PR01038">
    <property type="entry name" value="TRNASYNTHARG"/>
</dbReference>
<dbReference type="SMART" id="SM01016">
    <property type="entry name" value="Arg_tRNA_synt_N"/>
    <property type="match status" value="1"/>
</dbReference>
<dbReference type="SMART" id="SM00836">
    <property type="entry name" value="DALR_1"/>
    <property type="match status" value="1"/>
</dbReference>
<dbReference type="SUPFAM" id="SSF47323">
    <property type="entry name" value="Anticodon-binding domain of a subclass of class I aminoacyl-tRNA synthetases"/>
    <property type="match status" value="1"/>
</dbReference>
<dbReference type="SUPFAM" id="SSF55190">
    <property type="entry name" value="Arginyl-tRNA synthetase (ArgRS), N-terminal 'additional' domain"/>
    <property type="match status" value="1"/>
</dbReference>
<dbReference type="SUPFAM" id="SSF52374">
    <property type="entry name" value="Nucleotidylyl transferase"/>
    <property type="match status" value="1"/>
</dbReference>
<dbReference type="PROSITE" id="PS00178">
    <property type="entry name" value="AA_TRNA_LIGASE_I"/>
    <property type="match status" value="1"/>
</dbReference>
<keyword id="KW-0030">Aminoacyl-tRNA synthetase</keyword>
<keyword id="KW-0067">ATP-binding</keyword>
<keyword id="KW-0963">Cytoplasm</keyword>
<keyword id="KW-0436">Ligase</keyword>
<keyword id="KW-0547">Nucleotide-binding</keyword>
<keyword id="KW-0648">Protein biosynthesis</keyword>
<keyword id="KW-1185">Reference proteome</keyword>
<feature type="chain" id="PRO_0000242125" description="Arginine--tRNA ligase">
    <location>
        <begin position="1"/>
        <end position="562"/>
    </location>
</feature>
<feature type="short sequence motif" description="'HIGH' region">
    <location>
        <begin position="129"/>
        <end position="139"/>
    </location>
</feature>
<proteinExistence type="inferred from homology"/>
<sequence length="562" mass="62046">MKALLRALIGQGIEALRANGTLPGDTLPPDFVVERPKTREHGDFATNAAMLLAKAARSNPRALAQALLTALPDSNDVTKVEIAGPGFINFHLAPTAYQREVAHVIKQGHDYGRGLAGNGRSVGVEYVSANPTGPLHVGHGRAAAIGDSLARVLDANGWNVKREFYYNDAGVQIENLALSVQARAQGLTPDSAGWPENGYRGDYIADVANAYLTGDTVDMEGHLVTGTKDPADLESIRRFAVAYLRNEQNHDLAAFRVDFDIYFLESSLYKDGKVEEAVQKLIASGHTYEEGGALWLKSTDFGDDKDRVMRKSDGTYTYFVPDVAYHLTKWQRGYERAITELGADHHGSLTRVRAGLQAMELGIPQGWPEYVLHQMVTVMRDGEEVKLGKRAGGYVTLRDLIEETSADAVRWFLIARKPDSQLTFDIDLARAQSNDNPVFYVQYAHARVCSVLRQAQEKGYKYDQVHGLAELARLDDEHSLAVMLELSRYPEVVEIAGQTLEPYQIAQYLRELAHAFHTWYHNSKVLVDDAAERDAKLTLAVATQQVLANGLELLGVSAPEKM</sequence>
<accession>Q5H5M2</accession>
<protein>
    <recommendedName>
        <fullName evidence="1">Arginine--tRNA ligase</fullName>
        <ecNumber evidence="1">6.1.1.19</ecNumber>
    </recommendedName>
    <alternativeName>
        <fullName evidence="1">Arginyl-tRNA synthetase</fullName>
        <shortName evidence="1">ArgRS</shortName>
    </alternativeName>
</protein>
<gene>
    <name evidence="1" type="primary">argS</name>
    <name type="ordered locus">XOO0494</name>
</gene>